<reference key="1">
    <citation type="journal article" date="2000" name="Dev. Biol.">
        <title>The murine gene, Traube, is essential for the growth of preimplantation embryos.</title>
        <authorList>
            <person name="Thomas T."/>
            <person name="Voss A.K."/>
            <person name="Petrou P."/>
            <person name="Gruss P."/>
        </authorList>
    </citation>
    <scope>NUCLEOTIDE SEQUENCE [MRNA] (ISOFORM 1)</scope>
    <scope>SUBCELLULAR LOCATION</scope>
    <scope>TISSUE SPECIFICITY</scope>
    <scope>DEVELOPMENTAL STAGE</scope>
</reference>
<reference key="2">
    <citation type="journal article" date="2005" name="Science">
        <title>The transcriptional landscape of the mammalian genome.</title>
        <authorList>
            <person name="Carninci P."/>
            <person name="Kasukawa T."/>
            <person name="Katayama S."/>
            <person name="Gough J."/>
            <person name="Frith M.C."/>
            <person name="Maeda N."/>
            <person name="Oyama R."/>
            <person name="Ravasi T."/>
            <person name="Lenhard B."/>
            <person name="Wells C."/>
            <person name="Kodzius R."/>
            <person name="Shimokawa K."/>
            <person name="Bajic V.B."/>
            <person name="Brenner S.E."/>
            <person name="Batalov S."/>
            <person name="Forrest A.R."/>
            <person name="Zavolan M."/>
            <person name="Davis M.J."/>
            <person name="Wilming L.G."/>
            <person name="Aidinis V."/>
            <person name="Allen J.E."/>
            <person name="Ambesi-Impiombato A."/>
            <person name="Apweiler R."/>
            <person name="Aturaliya R.N."/>
            <person name="Bailey T.L."/>
            <person name="Bansal M."/>
            <person name="Baxter L."/>
            <person name="Beisel K.W."/>
            <person name="Bersano T."/>
            <person name="Bono H."/>
            <person name="Chalk A.M."/>
            <person name="Chiu K.P."/>
            <person name="Choudhary V."/>
            <person name="Christoffels A."/>
            <person name="Clutterbuck D.R."/>
            <person name="Crowe M.L."/>
            <person name="Dalla E."/>
            <person name="Dalrymple B.P."/>
            <person name="de Bono B."/>
            <person name="Della Gatta G."/>
            <person name="di Bernardo D."/>
            <person name="Down T."/>
            <person name="Engstrom P."/>
            <person name="Fagiolini M."/>
            <person name="Faulkner G."/>
            <person name="Fletcher C.F."/>
            <person name="Fukushima T."/>
            <person name="Furuno M."/>
            <person name="Futaki S."/>
            <person name="Gariboldi M."/>
            <person name="Georgii-Hemming P."/>
            <person name="Gingeras T.R."/>
            <person name="Gojobori T."/>
            <person name="Green R.E."/>
            <person name="Gustincich S."/>
            <person name="Harbers M."/>
            <person name="Hayashi Y."/>
            <person name="Hensch T.K."/>
            <person name="Hirokawa N."/>
            <person name="Hill D."/>
            <person name="Huminiecki L."/>
            <person name="Iacono M."/>
            <person name="Ikeo K."/>
            <person name="Iwama A."/>
            <person name="Ishikawa T."/>
            <person name="Jakt M."/>
            <person name="Kanapin A."/>
            <person name="Katoh M."/>
            <person name="Kawasawa Y."/>
            <person name="Kelso J."/>
            <person name="Kitamura H."/>
            <person name="Kitano H."/>
            <person name="Kollias G."/>
            <person name="Krishnan S.P."/>
            <person name="Kruger A."/>
            <person name="Kummerfeld S.K."/>
            <person name="Kurochkin I.V."/>
            <person name="Lareau L.F."/>
            <person name="Lazarevic D."/>
            <person name="Lipovich L."/>
            <person name="Liu J."/>
            <person name="Liuni S."/>
            <person name="McWilliam S."/>
            <person name="Madan Babu M."/>
            <person name="Madera M."/>
            <person name="Marchionni L."/>
            <person name="Matsuda H."/>
            <person name="Matsuzawa S."/>
            <person name="Miki H."/>
            <person name="Mignone F."/>
            <person name="Miyake S."/>
            <person name="Morris K."/>
            <person name="Mottagui-Tabar S."/>
            <person name="Mulder N."/>
            <person name="Nakano N."/>
            <person name="Nakauchi H."/>
            <person name="Ng P."/>
            <person name="Nilsson R."/>
            <person name="Nishiguchi S."/>
            <person name="Nishikawa S."/>
            <person name="Nori F."/>
            <person name="Ohara O."/>
            <person name="Okazaki Y."/>
            <person name="Orlando V."/>
            <person name="Pang K.C."/>
            <person name="Pavan W.J."/>
            <person name="Pavesi G."/>
            <person name="Pesole G."/>
            <person name="Petrovsky N."/>
            <person name="Piazza S."/>
            <person name="Reed J."/>
            <person name="Reid J.F."/>
            <person name="Ring B.Z."/>
            <person name="Ringwald M."/>
            <person name="Rost B."/>
            <person name="Ruan Y."/>
            <person name="Salzberg S.L."/>
            <person name="Sandelin A."/>
            <person name="Schneider C."/>
            <person name="Schoenbach C."/>
            <person name="Sekiguchi K."/>
            <person name="Semple C.A."/>
            <person name="Seno S."/>
            <person name="Sessa L."/>
            <person name="Sheng Y."/>
            <person name="Shibata Y."/>
            <person name="Shimada H."/>
            <person name="Shimada K."/>
            <person name="Silva D."/>
            <person name="Sinclair B."/>
            <person name="Sperling S."/>
            <person name="Stupka E."/>
            <person name="Sugiura K."/>
            <person name="Sultana R."/>
            <person name="Takenaka Y."/>
            <person name="Taki K."/>
            <person name="Tammoja K."/>
            <person name="Tan S.L."/>
            <person name="Tang S."/>
            <person name="Taylor M.S."/>
            <person name="Tegner J."/>
            <person name="Teichmann S.A."/>
            <person name="Ueda H.R."/>
            <person name="van Nimwegen E."/>
            <person name="Verardo R."/>
            <person name="Wei C.L."/>
            <person name="Yagi K."/>
            <person name="Yamanishi H."/>
            <person name="Zabarovsky E."/>
            <person name="Zhu S."/>
            <person name="Zimmer A."/>
            <person name="Hide W."/>
            <person name="Bult C."/>
            <person name="Grimmond S.M."/>
            <person name="Teasdale R.D."/>
            <person name="Liu E.T."/>
            <person name="Brusic V."/>
            <person name="Quackenbush J."/>
            <person name="Wahlestedt C."/>
            <person name="Mattick J.S."/>
            <person name="Hume D.A."/>
            <person name="Kai C."/>
            <person name="Sasaki D."/>
            <person name="Tomaru Y."/>
            <person name="Fukuda S."/>
            <person name="Kanamori-Katayama M."/>
            <person name="Suzuki M."/>
            <person name="Aoki J."/>
            <person name="Arakawa T."/>
            <person name="Iida J."/>
            <person name="Imamura K."/>
            <person name="Itoh M."/>
            <person name="Kato T."/>
            <person name="Kawaji H."/>
            <person name="Kawagashira N."/>
            <person name="Kawashima T."/>
            <person name="Kojima M."/>
            <person name="Kondo S."/>
            <person name="Konno H."/>
            <person name="Nakano K."/>
            <person name="Ninomiya N."/>
            <person name="Nishio T."/>
            <person name="Okada M."/>
            <person name="Plessy C."/>
            <person name="Shibata K."/>
            <person name="Shiraki T."/>
            <person name="Suzuki S."/>
            <person name="Tagami M."/>
            <person name="Waki K."/>
            <person name="Watahiki A."/>
            <person name="Okamura-Oho Y."/>
            <person name="Suzuki H."/>
            <person name="Kawai J."/>
            <person name="Hayashizaki Y."/>
        </authorList>
    </citation>
    <scope>NUCLEOTIDE SEQUENCE [LARGE SCALE MRNA] (ISOFORM 3)</scope>
    <source>
        <strain>C57BL/6J</strain>
        <tissue>Thymus</tissue>
    </source>
</reference>
<reference key="3">
    <citation type="journal article" date="2009" name="PLoS Biol.">
        <title>Lineage-specific biology revealed by a finished genome assembly of the mouse.</title>
        <authorList>
            <person name="Church D.M."/>
            <person name="Goodstadt L."/>
            <person name="Hillier L.W."/>
            <person name="Zody M.C."/>
            <person name="Goldstein S."/>
            <person name="She X."/>
            <person name="Bult C.J."/>
            <person name="Agarwala R."/>
            <person name="Cherry J.L."/>
            <person name="DiCuccio M."/>
            <person name="Hlavina W."/>
            <person name="Kapustin Y."/>
            <person name="Meric P."/>
            <person name="Maglott D."/>
            <person name="Birtle Z."/>
            <person name="Marques A.C."/>
            <person name="Graves T."/>
            <person name="Zhou S."/>
            <person name="Teague B."/>
            <person name="Potamousis K."/>
            <person name="Churas C."/>
            <person name="Place M."/>
            <person name="Herschleb J."/>
            <person name="Runnheim R."/>
            <person name="Forrest D."/>
            <person name="Amos-Landgraf J."/>
            <person name="Schwartz D.C."/>
            <person name="Cheng Z."/>
            <person name="Lindblad-Toh K."/>
            <person name="Eichler E.E."/>
            <person name="Ponting C.P."/>
        </authorList>
    </citation>
    <scope>NUCLEOTIDE SEQUENCE [LARGE SCALE GENOMIC DNA]</scope>
    <source>
        <strain>C57BL/6J</strain>
    </source>
</reference>
<reference key="4">
    <citation type="journal article" date="2004" name="Genome Res.">
        <title>The status, quality, and expansion of the NIH full-length cDNA project: the Mammalian Gene Collection (MGC).</title>
        <authorList>
            <consortium name="The MGC Project Team"/>
        </authorList>
    </citation>
    <scope>NUCLEOTIDE SEQUENCE [LARGE SCALE MRNA] (ISOFORM 1)</scope>
    <source>
        <strain>FVB/N</strain>
        <tissue>Mammary tumor</tissue>
    </source>
</reference>
<reference key="5">
    <citation type="journal article" date="2003" name="Gene">
        <title>Genomic structure and transcriptional regulation of Che-1, a novel partner of Rb.</title>
        <authorList>
            <person name="Monaco L."/>
            <person name="Passananti C."/>
            <person name="Fanciulli M."/>
        </authorList>
    </citation>
    <scope>NUCLEOTIDE SEQUENCE [GENOMIC DNA] OF 1-24 (ISOFORMS 1/2)</scope>
    <scope>NUCLEOTIDE SEQUENCE [MRNA] OF 1-265 (ISOFORM 2)</scope>
    <scope>TISSUE SPECIFICITY</scope>
    <source>
        <strain>SWR/J</strain>
        <tissue>Testis</tissue>
    </source>
</reference>
<reference key="6">
    <citation type="journal article" date="2007" name="Proc. Natl. Acad. Sci. U.S.A.">
        <title>Large-scale phosphorylation analysis of mouse liver.</title>
        <authorList>
            <person name="Villen J."/>
            <person name="Beausoleil S.A."/>
            <person name="Gerber S.A."/>
            <person name="Gygi S.P."/>
        </authorList>
    </citation>
    <scope>PHOSPHORYLATION [LARGE SCALE ANALYSIS] AT SER-287 AND SER-288</scope>
    <scope>IDENTIFICATION BY MASS SPECTROMETRY [LARGE SCALE ANALYSIS]</scope>
    <source>
        <tissue>Liver</tissue>
    </source>
</reference>
<reference key="7">
    <citation type="journal article" date="2009" name="Mol. Cell. Proteomics">
        <title>Large scale localization of protein phosphorylation by use of electron capture dissociation mass spectrometry.</title>
        <authorList>
            <person name="Sweet S.M."/>
            <person name="Bailey C.M."/>
            <person name="Cunningham D.L."/>
            <person name="Heath J.K."/>
            <person name="Cooper H.J."/>
        </authorList>
    </citation>
    <scope>IDENTIFICATION BY MASS SPECTROMETRY [LARGE SCALE ANALYSIS]</scope>
    <source>
        <tissue>Embryonic fibroblast</tissue>
    </source>
</reference>
<reference key="8">
    <citation type="journal article" date="2010" name="Cell">
        <title>A tissue-specific atlas of mouse protein phosphorylation and expression.</title>
        <authorList>
            <person name="Huttlin E.L."/>
            <person name="Jedrychowski M.P."/>
            <person name="Elias J.E."/>
            <person name="Goswami T."/>
            <person name="Rad R."/>
            <person name="Beausoleil S.A."/>
            <person name="Villen J."/>
            <person name="Haas W."/>
            <person name="Sowa M.E."/>
            <person name="Gygi S.P."/>
        </authorList>
    </citation>
    <scope>PHOSPHORYLATION [LARGE SCALE ANALYSIS] AT SER-283; SER-287 AND SER-288</scope>
    <scope>IDENTIFICATION BY MASS SPECTROMETRY [LARGE SCALE ANALYSIS]</scope>
    <source>
        <tissue>Brain</tissue>
        <tissue>Kidney</tissue>
        <tissue>Liver</tissue>
        <tissue>Lung</tissue>
        <tissue>Spleen</tissue>
        <tissue>Testis</tissue>
    </source>
</reference>
<keyword id="KW-0007">Acetylation</keyword>
<keyword id="KW-0025">Alternative splicing</keyword>
<keyword id="KW-0539">Nucleus</keyword>
<keyword id="KW-0597">Phosphoprotein</keyword>
<keyword id="KW-1185">Reference proteome</keyword>
<comment type="function">
    <text evidence="2">Part of the small subunit (SSU) processome, first precursor of the small eukaryotic ribosomal subunit. During the assembly of the SSU processome in the nucleolus, many ribosome biogenesis factors, an RNA chaperone and ribosomal proteins associate with the nascent pre-rRNA and work in concert to generate RNA folding, modifications, rearrangements and cleavage as well as targeted degradation of pre-ribosomal RNA by the RNA exosome. May function as a general inhibitor of the histone deacetylase HDAC1. Binding to the pocket region of RB1 may displace HDAC1 from RB1/E2F complexes, leading to activation of E2F target genes and cell cycle progression. Conversely, displacement of HDAC1 from SP1 bound to the CDKN1A promoter leads to increased expression of this CDK inhibitor and blocks cell cycle progression. Also antagonizes PAWR mediated induction of aberrant amyloid peptide production in Alzheimer disease (presenile and senile dementia), although the molecular basis for this phenomenon has not been described to date.</text>
</comment>
<comment type="subunit">
    <text evidence="2">Part of the small subunit (SSU) processome, composed of more than 70 proteins and the RNA chaperone small nucleolar RNA (snoRNA) U3. Interacts with POLR2J, RB1/RB, RBL1/P107 and RBL2/P130. Interacts with PAWR and SP1. May also bind MAPT.</text>
</comment>
<comment type="subcellular location">
    <subcellularLocation>
        <location evidence="4">Nucleus</location>
        <location evidence="4">Nucleolus</location>
    </subcellularLocation>
</comment>
<comment type="alternative products">
    <event type="alternative splicing"/>
    <isoform>
        <id>Q9JKX4-1</id>
        <name>1</name>
        <sequence type="displayed"/>
    </isoform>
    <isoform>
        <id>Q9JKX4-2</id>
        <name>2</name>
        <sequence type="described" ref="VSP_014897 VSP_014898"/>
    </isoform>
    <isoform>
        <id>Q9JKX4-3</id>
        <name>3</name>
        <sequence type="described" ref="VSP_014899 VSP_014900"/>
    </isoform>
</comment>
<comment type="tissue specificity">
    <text evidence="4 5">Expressed in adrenal gland, brain (Purkinje cells), heart, kidney, liver, lung, muscle, ovary and testis (at the protein level).</text>
</comment>
<comment type="developmental stage">
    <text evidence="4">Expressed uniformly throughout the embryo until 10.5 dpc. From 11.5 dpc, the relative expression level increases in the liver, hind brain, spinal cord, dorsal root ganglia, and the posterior commissure.</text>
</comment>
<comment type="similarity">
    <text evidence="8">Belongs to the AATF family.</text>
</comment>
<feature type="initiator methionine" description="Removed" evidence="2">
    <location>
        <position position="1"/>
    </location>
</feature>
<feature type="chain" id="PRO_0000056617" description="Protein AATF">
    <location>
        <begin position="2"/>
        <end position="526"/>
    </location>
</feature>
<feature type="region of interest" description="Disordered" evidence="3">
    <location>
        <begin position="13"/>
        <end position="51"/>
    </location>
</feature>
<feature type="region of interest" description="Disordered" evidence="3">
    <location>
        <begin position="63"/>
        <end position="175"/>
    </location>
</feature>
<feature type="region of interest" description="Binds POLR2J" evidence="1">
    <location>
        <begin position="240"/>
        <end position="282"/>
    </location>
</feature>
<feature type="region of interest" description="Disordered" evidence="3">
    <location>
        <begin position="274"/>
        <end position="307"/>
    </location>
</feature>
<feature type="region of interest" description="Binds RB1" evidence="1">
    <location>
        <begin position="283"/>
        <end position="338"/>
    </location>
</feature>
<feature type="region of interest" description="Binds RB1 and SP1" evidence="1">
    <location>
        <begin position="339"/>
        <end position="438"/>
    </location>
</feature>
<feature type="region of interest" description="Disordered" evidence="3">
    <location>
        <begin position="388"/>
        <end position="410"/>
    </location>
</feature>
<feature type="compositionally biased region" description="Basic and acidic residues" evidence="3">
    <location>
        <begin position="30"/>
        <end position="40"/>
    </location>
</feature>
<feature type="compositionally biased region" description="Acidic residues" evidence="3">
    <location>
        <begin position="96"/>
        <end position="108"/>
    </location>
</feature>
<feature type="compositionally biased region" description="Acidic residues" evidence="3">
    <location>
        <begin position="115"/>
        <end position="125"/>
    </location>
</feature>
<feature type="compositionally biased region" description="Acidic residues" evidence="3">
    <location>
        <begin position="147"/>
        <end position="174"/>
    </location>
</feature>
<feature type="compositionally biased region" description="Acidic residues" evidence="3">
    <location>
        <begin position="282"/>
        <end position="293"/>
    </location>
</feature>
<feature type="modified residue" description="N-acetylalanine" evidence="2">
    <location>
        <position position="2"/>
    </location>
</feature>
<feature type="modified residue" description="Phosphoserine" evidence="2">
    <location>
        <position position="62"/>
    </location>
</feature>
<feature type="modified residue" description="Phosphoserine" evidence="2">
    <location>
        <position position="170"/>
    </location>
</feature>
<feature type="modified residue" description="Phosphoserine" evidence="2">
    <location>
        <position position="240"/>
    </location>
</feature>
<feature type="modified residue" description="Phosphoserine" evidence="10">
    <location>
        <position position="283"/>
    </location>
</feature>
<feature type="modified residue" description="Phosphoserine" evidence="9 10">
    <location>
        <position position="287"/>
    </location>
</feature>
<feature type="modified residue" description="Phosphoserine" evidence="9 10">
    <location>
        <position position="288"/>
    </location>
</feature>
<feature type="splice variant" id="VSP_014897" description="In isoform 2." evidence="6">
    <original>H</original>
    <variation>P</variation>
    <location>
        <position position="84"/>
    </location>
</feature>
<feature type="splice variant" id="VSP_014898" description="In isoform 2." evidence="6">
    <location>
        <begin position="85"/>
        <end position="199"/>
    </location>
</feature>
<feature type="splice variant" id="VSP_014899" description="In isoform 3." evidence="7">
    <original>LLRELIERKTSSLDPNDQVAMGRQWL</original>
    <variation>VRLFLSFLCYNKPGVCILEPLIVSSG</variation>
    <location>
        <begin position="433"/>
        <end position="458"/>
    </location>
</feature>
<feature type="splice variant" id="VSP_014900" description="In isoform 3." evidence="7">
    <location>
        <begin position="459"/>
        <end position="526"/>
    </location>
</feature>
<feature type="sequence conflict" description="In Ref. 5; AAP73747." evidence="8" ref="5">
    <original>AA</original>
    <variation>GR</variation>
    <location>
        <begin position="2"/>
        <end position="3"/>
    </location>
</feature>
<feature type="sequence conflict" description="In Ref. 5; AAP73747." evidence="8" ref="5">
    <location>
        <begin position="4"/>
        <end position="5"/>
    </location>
</feature>
<feature type="sequence conflict" description="In Ref. 5; AAP73747." evidence="8" ref="5">
    <original>E</original>
    <variation>K</variation>
    <location>
        <position position="45"/>
    </location>
</feature>
<feature type="sequence conflict" description="In Ref. 5; AAP73747." evidence="8" ref="5">
    <original>E</original>
    <variation>K</variation>
    <location>
        <position position="237"/>
    </location>
</feature>
<feature type="sequence conflict" description="In Ref. 5; AAP73747." evidence="8" ref="5">
    <original>K</original>
    <variation>Q</variation>
    <location>
        <position position="247"/>
    </location>
</feature>
<feature type="sequence conflict" description="In Ref. 5; AAP73747." evidence="8" ref="5">
    <original>D</original>
    <variation>G</variation>
    <location>
        <position position="258"/>
    </location>
</feature>
<dbReference type="EMBL" id="AF222801">
    <property type="protein sequence ID" value="AAF26745.1"/>
    <property type="molecule type" value="mRNA"/>
</dbReference>
<dbReference type="EMBL" id="AK077789">
    <property type="protein sequence ID" value="BAC37011.1"/>
    <property type="molecule type" value="mRNA"/>
</dbReference>
<dbReference type="EMBL" id="AL603708">
    <property type="status" value="NOT_ANNOTATED_CDS"/>
    <property type="molecule type" value="Genomic_DNA"/>
</dbReference>
<dbReference type="EMBL" id="AL672252">
    <property type="status" value="NOT_ANNOTATED_CDS"/>
    <property type="molecule type" value="Genomic_DNA"/>
</dbReference>
<dbReference type="EMBL" id="BC025080">
    <property type="protein sequence ID" value="AAH25080.1"/>
    <property type="molecule type" value="mRNA"/>
</dbReference>
<dbReference type="EMBL" id="AF322223">
    <property type="protein sequence ID" value="AAK07639.1"/>
    <property type="molecule type" value="Genomic_DNA"/>
</dbReference>
<dbReference type="EMBL" id="AY306199">
    <property type="protein sequence ID" value="AAP73747.1"/>
    <property type="molecule type" value="mRNA"/>
</dbReference>
<dbReference type="CCDS" id="CCDS25186.1">
    <molecule id="Q9JKX4-1"/>
</dbReference>
<dbReference type="RefSeq" id="NP_062790.1">
    <molecule id="Q9JKX4-1"/>
    <property type="nucleotide sequence ID" value="NM_019816.1"/>
</dbReference>
<dbReference type="SMR" id="Q9JKX4"/>
<dbReference type="BioGRID" id="207901">
    <property type="interactions" value="59"/>
</dbReference>
<dbReference type="FunCoup" id="Q9JKX4">
    <property type="interactions" value="3826"/>
</dbReference>
<dbReference type="STRING" id="10090.ENSMUSP00000018841"/>
<dbReference type="iPTMnet" id="Q9JKX4"/>
<dbReference type="PhosphoSitePlus" id="Q9JKX4"/>
<dbReference type="jPOST" id="Q9JKX4"/>
<dbReference type="PaxDb" id="10090-ENSMUSP00000018841"/>
<dbReference type="PeptideAtlas" id="Q9JKX4"/>
<dbReference type="ProteomicsDB" id="286017">
    <molecule id="Q9JKX4-1"/>
</dbReference>
<dbReference type="ProteomicsDB" id="286018">
    <molecule id="Q9JKX4-2"/>
</dbReference>
<dbReference type="ProteomicsDB" id="286019">
    <molecule id="Q9JKX4-3"/>
</dbReference>
<dbReference type="Pumba" id="Q9JKX4"/>
<dbReference type="Antibodypedia" id="72876">
    <property type="antibodies" value="347 antibodies from 37 providers"/>
</dbReference>
<dbReference type="DNASU" id="56321"/>
<dbReference type="Ensembl" id="ENSMUST00000018841.3">
    <molecule id="Q9JKX4-1"/>
    <property type="protein sequence ID" value="ENSMUSP00000018841.3"/>
    <property type="gene ID" value="ENSMUSG00000018697.15"/>
</dbReference>
<dbReference type="GeneID" id="56321"/>
<dbReference type="KEGG" id="mmu:56321"/>
<dbReference type="UCSC" id="uc007kqm.1">
    <molecule id="Q9JKX4-1"/>
    <property type="organism name" value="mouse"/>
</dbReference>
<dbReference type="UCSC" id="uc007kqn.1">
    <molecule id="Q9JKX4-3"/>
    <property type="organism name" value="mouse"/>
</dbReference>
<dbReference type="AGR" id="MGI:1929608"/>
<dbReference type="CTD" id="26574"/>
<dbReference type="MGI" id="MGI:1929608">
    <property type="gene designation" value="Aatf"/>
</dbReference>
<dbReference type="VEuPathDB" id="HostDB:ENSMUSG00000018697"/>
<dbReference type="eggNOG" id="KOG2773">
    <property type="taxonomic scope" value="Eukaryota"/>
</dbReference>
<dbReference type="GeneTree" id="ENSGT00390000000288"/>
<dbReference type="HOGENOM" id="CLU_018299_1_2_1"/>
<dbReference type="InParanoid" id="Q9JKX4"/>
<dbReference type="OMA" id="INFMAPN"/>
<dbReference type="OrthoDB" id="5783963at2759"/>
<dbReference type="PhylomeDB" id="Q9JKX4"/>
<dbReference type="TreeFam" id="TF324341"/>
<dbReference type="BioGRID-ORCS" id="56321">
    <property type="hits" value="25 hits in 83 CRISPR screens"/>
</dbReference>
<dbReference type="ChiTaRS" id="Aatf">
    <property type="organism name" value="mouse"/>
</dbReference>
<dbReference type="PRO" id="PR:Q9JKX4"/>
<dbReference type="Proteomes" id="UP000000589">
    <property type="component" value="Chromosome 11"/>
</dbReference>
<dbReference type="RNAct" id="Q9JKX4">
    <property type="molecule type" value="protein"/>
</dbReference>
<dbReference type="Bgee" id="ENSMUSG00000018697">
    <property type="expression patterns" value="Expressed in ectoplacental cone and 267 other cell types or tissues"/>
</dbReference>
<dbReference type="GO" id="GO:0005737">
    <property type="term" value="C:cytoplasm"/>
    <property type="evidence" value="ECO:0000314"/>
    <property type="project" value="MGI"/>
</dbReference>
<dbReference type="GO" id="GO:0005829">
    <property type="term" value="C:cytosol"/>
    <property type="evidence" value="ECO:0000304"/>
    <property type="project" value="Reactome"/>
</dbReference>
<dbReference type="GO" id="GO:0005730">
    <property type="term" value="C:nucleolus"/>
    <property type="evidence" value="ECO:0000314"/>
    <property type="project" value="MGI"/>
</dbReference>
<dbReference type="GO" id="GO:0005654">
    <property type="term" value="C:nucleoplasm"/>
    <property type="evidence" value="ECO:0007669"/>
    <property type="project" value="Ensembl"/>
</dbReference>
<dbReference type="GO" id="GO:0005634">
    <property type="term" value="C:nucleus"/>
    <property type="evidence" value="ECO:0000314"/>
    <property type="project" value="MGI"/>
</dbReference>
<dbReference type="GO" id="GO:0032040">
    <property type="term" value="C:small-subunit processome"/>
    <property type="evidence" value="ECO:0000250"/>
    <property type="project" value="UniProtKB"/>
</dbReference>
<dbReference type="GO" id="GO:0005667">
    <property type="term" value="C:transcription regulator complex"/>
    <property type="evidence" value="ECO:0000314"/>
    <property type="project" value="MGI"/>
</dbReference>
<dbReference type="GO" id="GO:0043522">
    <property type="term" value="F:leucine zipper domain binding"/>
    <property type="evidence" value="ECO:0007669"/>
    <property type="project" value="Ensembl"/>
</dbReference>
<dbReference type="GO" id="GO:0007155">
    <property type="term" value="P:cell adhesion"/>
    <property type="evidence" value="ECO:0000315"/>
    <property type="project" value="MGI"/>
</dbReference>
<dbReference type="GO" id="GO:0040016">
    <property type="term" value="P:embryonic cleavage"/>
    <property type="evidence" value="ECO:0000315"/>
    <property type="project" value="MGI"/>
</dbReference>
<dbReference type="GO" id="GO:0042985">
    <property type="term" value="P:negative regulation of amyloid precursor protein biosynthetic process"/>
    <property type="evidence" value="ECO:0000314"/>
    <property type="project" value="MGI"/>
</dbReference>
<dbReference type="GO" id="GO:2001234">
    <property type="term" value="P:negative regulation of apoptotic signaling pathway"/>
    <property type="evidence" value="ECO:0000316"/>
    <property type="project" value="MGI"/>
</dbReference>
<dbReference type="GO" id="GO:0007346">
    <property type="term" value="P:regulation of mitotic cell cycle"/>
    <property type="evidence" value="ECO:0000315"/>
    <property type="project" value="MGI"/>
</dbReference>
<dbReference type="GO" id="GO:0042274">
    <property type="term" value="P:ribosomal small subunit biogenesis"/>
    <property type="evidence" value="ECO:0000250"/>
    <property type="project" value="UniProtKB"/>
</dbReference>
<dbReference type="GO" id="GO:0042254">
    <property type="term" value="P:ribosome biogenesis"/>
    <property type="evidence" value="ECO:0000315"/>
    <property type="project" value="MGI"/>
</dbReference>
<dbReference type="InterPro" id="IPR025160">
    <property type="entry name" value="AATF"/>
</dbReference>
<dbReference type="InterPro" id="IPR039223">
    <property type="entry name" value="AATF/Bfr2"/>
</dbReference>
<dbReference type="InterPro" id="IPR012617">
    <property type="entry name" value="AATF_C"/>
</dbReference>
<dbReference type="PANTHER" id="PTHR15565">
    <property type="entry name" value="AATF PROTEIN APOPTOSIS ANTAGONIZING TRANSCRIPTION FACTOR"/>
    <property type="match status" value="1"/>
</dbReference>
<dbReference type="PANTHER" id="PTHR15565:SF0">
    <property type="entry name" value="PROTEIN AATF"/>
    <property type="match status" value="1"/>
</dbReference>
<dbReference type="Pfam" id="PF13339">
    <property type="entry name" value="AATF-Che1"/>
    <property type="match status" value="1"/>
</dbReference>
<dbReference type="Pfam" id="PF08164">
    <property type="entry name" value="TRAUB"/>
    <property type="match status" value="1"/>
</dbReference>
<proteinExistence type="evidence at protein level"/>
<gene>
    <name type="primary">Aatf</name>
    <name type="synonym">Che1</name>
    <name type="synonym">Trb</name>
</gene>
<protein>
    <recommendedName>
        <fullName>Protein AATF</fullName>
    </recommendedName>
    <alternativeName>
        <fullName>Apoptosis-antagonizing transcription factor</fullName>
    </alternativeName>
    <alternativeName>
        <fullName>Rb-binding protein Che-1</fullName>
    </alternativeName>
    <alternativeName>
        <fullName>Traube protein</fullName>
    </alternativeName>
</protein>
<organism>
    <name type="scientific">Mus musculus</name>
    <name type="common">Mouse</name>
    <dbReference type="NCBI Taxonomy" id="10090"/>
    <lineage>
        <taxon>Eukaryota</taxon>
        <taxon>Metazoa</taxon>
        <taxon>Chordata</taxon>
        <taxon>Craniata</taxon>
        <taxon>Vertebrata</taxon>
        <taxon>Euteleostomi</taxon>
        <taxon>Mammalia</taxon>
        <taxon>Eutheria</taxon>
        <taxon>Euarchontoglires</taxon>
        <taxon>Glires</taxon>
        <taxon>Rodentia</taxon>
        <taxon>Myomorpha</taxon>
        <taxon>Muroidea</taxon>
        <taxon>Muridae</taxon>
        <taxon>Murinae</taxon>
        <taxon>Mus</taxon>
        <taxon>Mus</taxon>
    </lineage>
</organism>
<accession>Q9JKX4</accession>
<accession>Q7TQN1</accession>
<accession>Q8C5Q2</accession>
<accession>Q99P89</accession>
<evidence type="ECO:0000250" key="1"/>
<evidence type="ECO:0000250" key="2">
    <source>
        <dbReference type="UniProtKB" id="Q9NY61"/>
    </source>
</evidence>
<evidence type="ECO:0000256" key="3">
    <source>
        <dbReference type="SAM" id="MobiDB-lite"/>
    </source>
</evidence>
<evidence type="ECO:0000269" key="4">
    <source>
    </source>
</evidence>
<evidence type="ECO:0000269" key="5">
    <source>
    </source>
</evidence>
<evidence type="ECO:0000303" key="6">
    <source>
    </source>
</evidence>
<evidence type="ECO:0000303" key="7">
    <source>
    </source>
</evidence>
<evidence type="ECO:0000305" key="8"/>
<evidence type="ECO:0007744" key="9">
    <source>
    </source>
</evidence>
<evidence type="ECO:0007744" key="10">
    <source>
    </source>
</evidence>
<name>AATF_MOUSE</name>
<sequence length="526" mass="59482">MAAPQPLALQLEQLLNPRPREADPEADPEEATRARVIDRFDEGEEEKDDLAVSSIRKLAPVSLLDTDKRYSGKTTSRKAWKEDHWEQALPSSSDNEASDEGGSEDGDSEGLGLEEISEDVDEDLEDNKISDEGGSEDGDSEGLGLEEFSEDVEEDLEGEDEEDREEDRNSEDDGVVAAFSSVKVSEEVEKGRAVKNQIALWDQLLEGRIKLQKALLTTNQLPQPDVFPVFKDKGGPEFASALKNSHKALKALLRSLVDLQEELLFQYPDTRHIVNGAKPNTESEEISSEDDELVGEKKKQRKAPPKRKLEMEDYPSFMAKRFADFTIYRNHTLQKWHDKTKLASGKLGKGFGAFERSILTQIDHIMMDKERLLRRTQTKRSAYRVLGKPEPVPEPVAETLPGEPETLPQGPANAHLRDLDEEIFDDDDFYHQLLRELIERKTSSLDPNDQVAMGRQWLAIQKLRSKIRKKVDRKASKGRKLRFHVLSKLLSFMAPIDHTAMSDDARTELFRSLFGQLNPPDADRGK</sequence>